<accession>B4T8M6</accession>
<sequence length="151" mass="16945">MTIWVDADACPNVIKEILYRAAERMQLPLILVANQALRVPPSRFIRTLRVAAGFDVADNEIVRQCEAGDLVITADIPLAAEVLEKGAAALNPRGERYSDATIRERLTMRDFMDTLRASGVQTGGPNTLSPRDRQHFAAELDKWWLESQRKK</sequence>
<evidence type="ECO:0000255" key="1">
    <source>
        <dbReference type="HAMAP-Rule" id="MF_00489"/>
    </source>
</evidence>
<dbReference type="EMBL" id="CP001120">
    <property type="protein sequence ID" value="ACF68068.1"/>
    <property type="molecule type" value="Genomic_DNA"/>
</dbReference>
<dbReference type="RefSeq" id="WP_000158137.1">
    <property type="nucleotide sequence ID" value="NC_011083.1"/>
</dbReference>
<dbReference type="KEGG" id="seh:SeHA_C0485"/>
<dbReference type="HOGENOM" id="CLU_106619_1_0_6"/>
<dbReference type="Proteomes" id="UP000001866">
    <property type="component" value="Chromosome"/>
</dbReference>
<dbReference type="CDD" id="cd18720">
    <property type="entry name" value="PIN_YqxD-like"/>
    <property type="match status" value="1"/>
</dbReference>
<dbReference type="HAMAP" id="MF_00489">
    <property type="entry name" value="UPF0178"/>
    <property type="match status" value="1"/>
</dbReference>
<dbReference type="InterPro" id="IPR003791">
    <property type="entry name" value="UPF0178"/>
</dbReference>
<dbReference type="NCBIfam" id="NF001095">
    <property type="entry name" value="PRK00124.1"/>
    <property type="match status" value="1"/>
</dbReference>
<dbReference type="PANTHER" id="PTHR35146">
    <property type="entry name" value="UPF0178 PROTEIN YAII"/>
    <property type="match status" value="1"/>
</dbReference>
<dbReference type="PANTHER" id="PTHR35146:SF1">
    <property type="entry name" value="UPF0178 PROTEIN YAII"/>
    <property type="match status" value="1"/>
</dbReference>
<dbReference type="Pfam" id="PF02639">
    <property type="entry name" value="DUF188"/>
    <property type="match status" value="1"/>
</dbReference>
<protein>
    <recommendedName>
        <fullName evidence="1">UPF0178 protein YaiI</fullName>
    </recommendedName>
</protein>
<gene>
    <name evidence="1" type="primary">yaiI</name>
    <name type="ordered locus">SeHA_C0485</name>
</gene>
<proteinExistence type="inferred from homology"/>
<reference key="1">
    <citation type="journal article" date="2011" name="J. Bacteriol.">
        <title>Comparative genomics of 28 Salmonella enterica isolates: evidence for CRISPR-mediated adaptive sublineage evolution.</title>
        <authorList>
            <person name="Fricke W.F."/>
            <person name="Mammel M.K."/>
            <person name="McDermott P.F."/>
            <person name="Tartera C."/>
            <person name="White D.G."/>
            <person name="Leclerc J.E."/>
            <person name="Ravel J."/>
            <person name="Cebula T.A."/>
        </authorList>
    </citation>
    <scope>NUCLEOTIDE SEQUENCE [LARGE SCALE GENOMIC DNA]</scope>
    <source>
        <strain>SL476</strain>
    </source>
</reference>
<feature type="chain" id="PRO_1000126210" description="UPF0178 protein YaiI">
    <location>
        <begin position="1"/>
        <end position="151"/>
    </location>
</feature>
<organism>
    <name type="scientific">Salmonella heidelberg (strain SL476)</name>
    <dbReference type="NCBI Taxonomy" id="454169"/>
    <lineage>
        <taxon>Bacteria</taxon>
        <taxon>Pseudomonadati</taxon>
        <taxon>Pseudomonadota</taxon>
        <taxon>Gammaproteobacteria</taxon>
        <taxon>Enterobacterales</taxon>
        <taxon>Enterobacteriaceae</taxon>
        <taxon>Salmonella</taxon>
    </lineage>
</organism>
<name>YAII_SALHS</name>
<comment type="similarity">
    <text evidence="1">Belongs to the UPF0178 family.</text>
</comment>